<gene>
    <name evidence="1" type="primary">phnW</name>
    <name type="ordered locus">PputW619_3461</name>
</gene>
<organism>
    <name type="scientific">Pseudomonas putida (strain W619)</name>
    <dbReference type="NCBI Taxonomy" id="390235"/>
    <lineage>
        <taxon>Bacteria</taxon>
        <taxon>Pseudomonadati</taxon>
        <taxon>Pseudomonadota</taxon>
        <taxon>Gammaproteobacteria</taxon>
        <taxon>Pseudomonadales</taxon>
        <taxon>Pseudomonadaceae</taxon>
        <taxon>Pseudomonas</taxon>
    </lineage>
</organism>
<proteinExistence type="inferred from homology"/>
<keyword id="KW-0032">Aminotransferase</keyword>
<keyword id="KW-0663">Pyridoxal phosphate</keyword>
<keyword id="KW-0670">Pyruvate</keyword>
<keyword id="KW-0808">Transferase</keyword>
<dbReference type="EC" id="2.6.1.37" evidence="1"/>
<dbReference type="EMBL" id="CP000949">
    <property type="protein sequence ID" value="ACA73944.1"/>
    <property type="molecule type" value="Genomic_DNA"/>
</dbReference>
<dbReference type="SMR" id="B1JBM5"/>
<dbReference type="STRING" id="390235.PputW619_3461"/>
<dbReference type="KEGG" id="ppw:PputW619_3461"/>
<dbReference type="eggNOG" id="COG0075">
    <property type="taxonomic scope" value="Bacteria"/>
</dbReference>
<dbReference type="HOGENOM" id="CLU_027686_3_1_6"/>
<dbReference type="OrthoDB" id="9766472at2"/>
<dbReference type="GO" id="GO:0047304">
    <property type="term" value="F:2-aminoethylphosphonate-pyruvate transaminase activity"/>
    <property type="evidence" value="ECO:0007669"/>
    <property type="project" value="UniProtKB-UniRule"/>
</dbReference>
<dbReference type="GO" id="GO:0019700">
    <property type="term" value="P:organic phosphonate catabolic process"/>
    <property type="evidence" value="ECO:0007669"/>
    <property type="project" value="InterPro"/>
</dbReference>
<dbReference type="Gene3D" id="3.90.1150.10">
    <property type="entry name" value="Aspartate Aminotransferase, domain 1"/>
    <property type="match status" value="1"/>
</dbReference>
<dbReference type="Gene3D" id="3.40.640.10">
    <property type="entry name" value="Type I PLP-dependent aspartate aminotransferase-like (Major domain)"/>
    <property type="match status" value="1"/>
</dbReference>
<dbReference type="HAMAP" id="MF_01376">
    <property type="entry name" value="PhnW_aminotrans_5"/>
    <property type="match status" value="1"/>
</dbReference>
<dbReference type="InterPro" id="IPR000192">
    <property type="entry name" value="Aminotrans_V_dom"/>
</dbReference>
<dbReference type="InterPro" id="IPR012703">
    <property type="entry name" value="NH2EtPonate_pyrv_transaminase"/>
</dbReference>
<dbReference type="InterPro" id="IPR015424">
    <property type="entry name" value="PyrdxlP-dep_Trfase"/>
</dbReference>
<dbReference type="InterPro" id="IPR015421">
    <property type="entry name" value="PyrdxlP-dep_Trfase_major"/>
</dbReference>
<dbReference type="InterPro" id="IPR015422">
    <property type="entry name" value="PyrdxlP-dep_Trfase_small"/>
</dbReference>
<dbReference type="InterPro" id="IPR024169">
    <property type="entry name" value="SP_NH2Trfase/AEP_transaminase"/>
</dbReference>
<dbReference type="NCBIfam" id="TIGR03301">
    <property type="entry name" value="PhnW-AepZ"/>
    <property type="match status" value="1"/>
</dbReference>
<dbReference type="NCBIfam" id="NF010006">
    <property type="entry name" value="PRK13479.1"/>
    <property type="match status" value="1"/>
</dbReference>
<dbReference type="NCBIfam" id="TIGR02326">
    <property type="entry name" value="transamin_PhnW"/>
    <property type="match status" value="1"/>
</dbReference>
<dbReference type="PANTHER" id="PTHR42778">
    <property type="entry name" value="2-AMINOETHYLPHOSPHONATE--PYRUVATE TRANSAMINASE"/>
    <property type="match status" value="1"/>
</dbReference>
<dbReference type="PANTHER" id="PTHR42778:SF1">
    <property type="entry name" value="2-AMINOETHYLPHOSPHONATE--PYRUVATE TRANSAMINASE"/>
    <property type="match status" value="1"/>
</dbReference>
<dbReference type="Pfam" id="PF00266">
    <property type="entry name" value="Aminotran_5"/>
    <property type="match status" value="1"/>
</dbReference>
<dbReference type="PIRSF" id="PIRSF000524">
    <property type="entry name" value="SPT"/>
    <property type="match status" value="1"/>
</dbReference>
<dbReference type="SUPFAM" id="SSF53383">
    <property type="entry name" value="PLP-dependent transferases"/>
    <property type="match status" value="1"/>
</dbReference>
<feature type="chain" id="PRO_1000144853" description="2-aminoethylphosphonate--pyruvate transaminase">
    <location>
        <begin position="1"/>
        <end position="368"/>
    </location>
</feature>
<feature type="modified residue" description="N6-(pyridoxal phosphate)lysine" evidence="1">
    <location>
        <position position="192"/>
    </location>
</feature>
<name>PHNW_PSEPW</name>
<evidence type="ECO:0000255" key="1">
    <source>
        <dbReference type="HAMAP-Rule" id="MF_01376"/>
    </source>
</evidence>
<protein>
    <recommendedName>
        <fullName evidence="1">2-aminoethylphosphonate--pyruvate transaminase</fullName>
        <ecNumber evidence="1">2.6.1.37</ecNumber>
    </recommendedName>
    <alternativeName>
        <fullName evidence="1">2-aminoethylphosphonate aminotransferase</fullName>
    </alternativeName>
    <alternativeName>
        <fullName evidence="1">AEP transaminase</fullName>
        <shortName evidence="1">AEPT</shortName>
    </alternativeName>
</protein>
<accession>B1JBM5</accession>
<comment type="function">
    <text evidence="1">Involved in phosphonate degradation.</text>
</comment>
<comment type="catalytic activity">
    <reaction evidence="1">
        <text>(2-aminoethyl)phosphonate + pyruvate = phosphonoacetaldehyde + L-alanine</text>
        <dbReference type="Rhea" id="RHEA:17021"/>
        <dbReference type="ChEBI" id="CHEBI:15361"/>
        <dbReference type="ChEBI" id="CHEBI:57418"/>
        <dbReference type="ChEBI" id="CHEBI:57972"/>
        <dbReference type="ChEBI" id="CHEBI:58383"/>
        <dbReference type="EC" id="2.6.1.37"/>
    </reaction>
</comment>
<comment type="cofactor">
    <cofactor evidence="1">
        <name>pyridoxal 5'-phosphate</name>
        <dbReference type="ChEBI" id="CHEBI:597326"/>
    </cofactor>
</comment>
<comment type="subunit">
    <text evidence="1">Homodimer.</text>
</comment>
<comment type="similarity">
    <text evidence="1">Belongs to the class-V pyridoxal-phosphate-dependent aminotransferase family. PhnW subfamily.</text>
</comment>
<sequence length="368" mass="39674">MSNAPILLTPGPLTTSLRTRQAMLVDWGSWDRDFNQLTASVCEQLLAIIDGSASHHCVPLQGSGTFAVEAAIGTLVPRDGKVLVLINGAYGQRLAKICKVLGRNFSTFETAEDQPTTAADVDRLLAADPSVTHVALIHCETSTGILNPLHEIAQVIKRHGKRLIIDAMSSFGALPIDAREIPFEALIAASGKCLEGVPGMGFVFAEKTALAAAEGNAHSLAMDLHDQHAYMAKTGQWRFTPPTHVIAALHEALLQYAEEGGLPARHQRYADNCKTLLDGMAAIGLRSFLPADIQAPIIVTFHAPNDARYQFKDFYERVKAKGFILYPGKLTQVETFRVGCIGVVGPDGMQAAVNAVADVLREMEVLDI</sequence>
<reference key="1">
    <citation type="submission" date="2008-02" db="EMBL/GenBank/DDBJ databases">
        <title>Complete sequence of Pseudomonas putida W619.</title>
        <authorList>
            <person name="Copeland A."/>
            <person name="Lucas S."/>
            <person name="Lapidus A."/>
            <person name="Barry K."/>
            <person name="Detter J.C."/>
            <person name="Glavina del Rio T."/>
            <person name="Dalin E."/>
            <person name="Tice H."/>
            <person name="Pitluck S."/>
            <person name="Chain P."/>
            <person name="Malfatti S."/>
            <person name="Shin M."/>
            <person name="Vergez L."/>
            <person name="Schmutz J."/>
            <person name="Larimer F."/>
            <person name="Land M."/>
            <person name="Hauser L."/>
            <person name="Kyrpides N."/>
            <person name="Kim E."/>
            <person name="Taghavi S."/>
            <person name="Vangronsveld D."/>
            <person name="van der Lelie D."/>
            <person name="Richardson P."/>
        </authorList>
    </citation>
    <scope>NUCLEOTIDE SEQUENCE [LARGE SCALE GENOMIC DNA]</scope>
    <source>
        <strain>W619</strain>
    </source>
</reference>